<dbReference type="EC" id="1.1.1.94" evidence="1"/>
<dbReference type="EMBL" id="CP000544">
    <property type="protein sequence ID" value="ABM61989.1"/>
    <property type="molecule type" value="Genomic_DNA"/>
</dbReference>
<dbReference type="RefSeq" id="WP_011814012.1">
    <property type="nucleotide sequence ID" value="NC_008789.1"/>
</dbReference>
<dbReference type="SMR" id="A1WWC7"/>
<dbReference type="STRING" id="349124.Hhal_1214"/>
<dbReference type="KEGG" id="hha:Hhal_1214"/>
<dbReference type="eggNOG" id="COG0240">
    <property type="taxonomic scope" value="Bacteria"/>
</dbReference>
<dbReference type="HOGENOM" id="CLU_033449_0_2_6"/>
<dbReference type="OrthoDB" id="9812273at2"/>
<dbReference type="UniPathway" id="UPA00940"/>
<dbReference type="Proteomes" id="UP000000647">
    <property type="component" value="Chromosome"/>
</dbReference>
<dbReference type="GO" id="GO:0005829">
    <property type="term" value="C:cytosol"/>
    <property type="evidence" value="ECO:0007669"/>
    <property type="project" value="TreeGrafter"/>
</dbReference>
<dbReference type="GO" id="GO:0047952">
    <property type="term" value="F:glycerol-3-phosphate dehydrogenase [NAD(P)+] activity"/>
    <property type="evidence" value="ECO:0007669"/>
    <property type="project" value="UniProtKB-UniRule"/>
</dbReference>
<dbReference type="GO" id="GO:0051287">
    <property type="term" value="F:NAD binding"/>
    <property type="evidence" value="ECO:0007669"/>
    <property type="project" value="InterPro"/>
</dbReference>
<dbReference type="GO" id="GO:0005975">
    <property type="term" value="P:carbohydrate metabolic process"/>
    <property type="evidence" value="ECO:0007669"/>
    <property type="project" value="InterPro"/>
</dbReference>
<dbReference type="GO" id="GO:0046167">
    <property type="term" value="P:glycerol-3-phosphate biosynthetic process"/>
    <property type="evidence" value="ECO:0007669"/>
    <property type="project" value="UniProtKB-UniRule"/>
</dbReference>
<dbReference type="GO" id="GO:0046168">
    <property type="term" value="P:glycerol-3-phosphate catabolic process"/>
    <property type="evidence" value="ECO:0007669"/>
    <property type="project" value="InterPro"/>
</dbReference>
<dbReference type="GO" id="GO:0046474">
    <property type="term" value="P:glycerophospholipid biosynthetic process"/>
    <property type="evidence" value="ECO:0007669"/>
    <property type="project" value="TreeGrafter"/>
</dbReference>
<dbReference type="FunFam" id="1.10.1040.10:FF:000001">
    <property type="entry name" value="Glycerol-3-phosphate dehydrogenase [NAD(P)+]"/>
    <property type="match status" value="1"/>
</dbReference>
<dbReference type="FunFam" id="3.40.50.720:FF:000019">
    <property type="entry name" value="Glycerol-3-phosphate dehydrogenase [NAD(P)+]"/>
    <property type="match status" value="1"/>
</dbReference>
<dbReference type="Gene3D" id="1.10.1040.10">
    <property type="entry name" value="N-(1-d-carboxylethyl)-l-norvaline Dehydrogenase, domain 2"/>
    <property type="match status" value="1"/>
</dbReference>
<dbReference type="Gene3D" id="3.40.50.720">
    <property type="entry name" value="NAD(P)-binding Rossmann-like Domain"/>
    <property type="match status" value="1"/>
</dbReference>
<dbReference type="HAMAP" id="MF_00394">
    <property type="entry name" value="NAD_Glyc3P_dehydrog"/>
    <property type="match status" value="1"/>
</dbReference>
<dbReference type="InterPro" id="IPR008927">
    <property type="entry name" value="6-PGluconate_DH-like_C_sf"/>
</dbReference>
<dbReference type="InterPro" id="IPR013328">
    <property type="entry name" value="6PGD_dom2"/>
</dbReference>
<dbReference type="InterPro" id="IPR006168">
    <property type="entry name" value="G3P_DH_NAD-dep"/>
</dbReference>
<dbReference type="InterPro" id="IPR006109">
    <property type="entry name" value="G3P_DH_NAD-dep_C"/>
</dbReference>
<dbReference type="InterPro" id="IPR011128">
    <property type="entry name" value="G3P_DH_NAD-dep_N"/>
</dbReference>
<dbReference type="InterPro" id="IPR036291">
    <property type="entry name" value="NAD(P)-bd_dom_sf"/>
</dbReference>
<dbReference type="NCBIfam" id="NF000940">
    <property type="entry name" value="PRK00094.1-2"/>
    <property type="match status" value="1"/>
</dbReference>
<dbReference type="NCBIfam" id="NF000942">
    <property type="entry name" value="PRK00094.1-4"/>
    <property type="match status" value="1"/>
</dbReference>
<dbReference type="PANTHER" id="PTHR11728">
    <property type="entry name" value="GLYCEROL-3-PHOSPHATE DEHYDROGENASE"/>
    <property type="match status" value="1"/>
</dbReference>
<dbReference type="PANTHER" id="PTHR11728:SF1">
    <property type="entry name" value="GLYCEROL-3-PHOSPHATE DEHYDROGENASE [NAD(+)] 2, CHLOROPLASTIC"/>
    <property type="match status" value="1"/>
</dbReference>
<dbReference type="Pfam" id="PF07479">
    <property type="entry name" value="NAD_Gly3P_dh_C"/>
    <property type="match status" value="1"/>
</dbReference>
<dbReference type="Pfam" id="PF01210">
    <property type="entry name" value="NAD_Gly3P_dh_N"/>
    <property type="match status" value="1"/>
</dbReference>
<dbReference type="PIRSF" id="PIRSF000114">
    <property type="entry name" value="Glycerol-3-P_dh"/>
    <property type="match status" value="1"/>
</dbReference>
<dbReference type="PRINTS" id="PR00077">
    <property type="entry name" value="GPDHDRGNASE"/>
</dbReference>
<dbReference type="SUPFAM" id="SSF48179">
    <property type="entry name" value="6-phosphogluconate dehydrogenase C-terminal domain-like"/>
    <property type="match status" value="1"/>
</dbReference>
<dbReference type="SUPFAM" id="SSF51735">
    <property type="entry name" value="NAD(P)-binding Rossmann-fold domains"/>
    <property type="match status" value="1"/>
</dbReference>
<dbReference type="PROSITE" id="PS00957">
    <property type="entry name" value="NAD_G3PDH"/>
    <property type="match status" value="1"/>
</dbReference>
<keyword id="KW-0963">Cytoplasm</keyword>
<keyword id="KW-0444">Lipid biosynthesis</keyword>
<keyword id="KW-0443">Lipid metabolism</keyword>
<keyword id="KW-0520">NAD</keyword>
<keyword id="KW-0521">NADP</keyword>
<keyword id="KW-0547">Nucleotide-binding</keyword>
<keyword id="KW-0560">Oxidoreductase</keyword>
<keyword id="KW-0594">Phospholipid biosynthesis</keyword>
<keyword id="KW-1208">Phospholipid metabolism</keyword>
<keyword id="KW-1185">Reference proteome</keyword>
<proteinExistence type="inferred from homology"/>
<accession>A1WWC7</accession>
<sequence>MASTIAVLGAGAWGTALASVLGRNGHAVRLWTREAEHAAAINAERVNQRHLPDCPLPDSLTATADLETALGGTDWLLIAVPSSAFRGLIERLAPYRPGKVVWATKGLESESGGFLHDVVQAGLDPAPAMAVISGPSFAAEVGQGLPTAITVAADDADLAAEVVRAFHNDRFRPYSSTDMTGVELGGAVKNVLAVATGASDGLGLGANARAALVTRGLAEISRLGAALGADPQTLIGLAGMGDLLLTCTDDQSRNRRFGFALGQGATVETALASVGSTVEGARTAAELHSLAERHSVEMPICNMVYRVVSGDTPLEQAVRELMERTPKAEFDD</sequence>
<feature type="chain" id="PRO_1000060785" description="Glycerol-3-phosphate dehydrogenase [NAD(P)+]">
    <location>
        <begin position="1"/>
        <end position="332"/>
    </location>
</feature>
<feature type="active site" description="Proton acceptor" evidence="1">
    <location>
        <position position="189"/>
    </location>
</feature>
<feature type="binding site" evidence="1">
    <location>
        <position position="13"/>
    </location>
    <ligand>
        <name>NADPH</name>
        <dbReference type="ChEBI" id="CHEBI:57783"/>
    </ligand>
</feature>
<feature type="binding site" evidence="1">
    <location>
        <position position="33"/>
    </location>
    <ligand>
        <name>NADPH</name>
        <dbReference type="ChEBI" id="CHEBI:57783"/>
    </ligand>
</feature>
<feature type="binding site" evidence="1">
    <location>
        <position position="105"/>
    </location>
    <ligand>
        <name>NADPH</name>
        <dbReference type="ChEBI" id="CHEBI:57783"/>
    </ligand>
</feature>
<feature type="binding site" evidence="1">
    <location>
        <position position="105"/>
    </location>
    <ligand>
        <name>sn-glycerol 3-phosphate</name>
        <dbReference type="ChEBI" id="CHEBI:57597"/>
    </ligand>
</feature>
<feature type="binding site" evidence="1">
    <location>
        <position position="134"/>
    </location>
    <ligand>
        <name>sn-glycerol 3-phosphate</name>
        <dbReference type="ChEBI" id="CHEBI:57597"/>
    </ligand>
</feature>
<feature type="binding site" evidence="1">
    <location>
        <position position="136"/>
    </location>
    <ligand>
        <name>sn-glycerol 3-phosphate</name>
        <dbReference type="ChEBI" id="CHEBI:57597"/>
    </ligand>
</feature>
<feature type="binding site" evidence="1">
    <location>
        <position position="138"/>
    </location>
    <ligand>
        <name>NADPH</name>
        <dbReference type="ChEBI" id="CHEBI:57783"/>
    </ligand>
</feature>
<feature type="binding site" evidence="1">
    <location>
        <position position="189"/>
    </location>
    <ligand>
        <name>sn-glycerol 3-phosphate</name>
        <dbReference type="ChEBI" id="CHEBI:57597"/>
    </ligand>
</feature>
<feature type="binding site" evidence="1">
    <location>
        <position position="242"/>
    </location>
    <ligand>
        <name>sn-glycerol 3-phosphate</name>
        <dbReference type="ChEBI" id="CHEBI:57597"/>
    </ligand>
</feature>
<feature type="binding site" evidence="1">
    <location>
        <position position="252"/>
    </location>
    <ligand>
        <name>sn-glycerol 3-phosphate</name>
        <dbReference type="ChEBI" id="CHEBI:57597"/>
    </ligand>
</feature>
<feature type="binding site" evidence="1">
    <location>
        <position position="253"/>
    </location>
    <ligand>
        <name>NADPH</name>
        <dbReference type="ChEBI" id="CHEBI:57783"/>
    </ligand>
</feature>
<feature type="binding site" evidence="1">
    <location>
        <position position="253"/>
    </location>
    <ligand>
        <name>sn-glycerol 3-phosphate</name>
        <dbReference type="ChEBI" id="CHEBI:57597"/>
    </ligand>
</feature>
<feature type="binding site" evidence="1">
    <location>
        <position position="254"/>
    </location>
    <ligand>
        <name>sn-glycerol 3-phosphate</name>
        <dbReference type="ChEBI" id="CHEBI:57597"/>
    </ligand>
</feature>
<feature type="binding site" evidence="1">
    <location>
        <position position="279"/>
    </location>
    <ligand>
        <name>NADPH</name>
        <dbReference type="ChEBI" id="CHEBI:57783"/>
    </ligand>
</feature>
<protein>
    <recommendedName>
        <fullName evidence="1">Glycerol-3-phosphate dehydrogenase [NAD(P)+]</fullName>
        <ecNumber evidence="1">1.1.1.94</ecNumber>
    </recommendedName>
    <alternativeName>
        <fullName evidence="1">NAD(P)(+)-dependent glycerol-3-phosphate dehydrogenase</fullName>
    </alternativeName>
    <alternativeName>
        <fullName evidence="1">NAD(P)H-dependent dihydroxyacetone-phosphate reductase</fullName>
    </alternativeName>
</protein>
<gene>
    <name evidence="1" type="primary">gpsA</name>
    <name type="ordered locus">Hhal_1214</name>
</gene>
<reference key="1">
    <citation type="submission" date="2006-12" db="EMBL/GenBank/DDBJ databases">
        <title>Complete sequence of Halorhodospira halophila SL1.</title>
        <authorList>
            <consortium name="US DOE Joint Genome Institute"/>
            <person name="Copeland A."/>
            <person name="Lucas S."/>
            <person name="Lapidus A."/>
            <person name="Barry K."/>
            <person name="Detter J.C."/>
            <person name="Glavina del Rio T."/>
            <person name="Hammon N."/>
            <person name="Israni S."/>
            <person name="Dalin E."/>
            <person name="Tice H."/>
            <person name="Pitluck S."/>
            <person name="Saunders E."/>
            <person name="Brettin T."/>
            <person name="Bruce D."/>
            <person name="Han C."/>
            <person name="Tapia R."/>
            <person name="Schmutz J."/>
            <person name="Larimer F."/>
            <person name="Land M."/>
            <person name="Hauser L."/>
            <person name="Kyrpides N."/>
            <person name="Mikhailova N."/>
            <person name="Hoff W."/>
            <person name="Richardson P."/>
        </authorList>
    </citation>
    <scope>NUCLEOTIDE SEQUENCE [LARGE SCALE GENOMIC DNA]</scope>
    <source>
        <strain>DSM 244 / SL1</strain>
    </source>
</reference>
<name>GPDA_HALHL</name>
<evidence type="ECO:0000255" key="1">
    <source>
        <dbReference type="HAMAP-Rule" id="MF_00394"/>
    </source>
</evidence>
<organism>
    <name type="scientific">Halorhodospira halophila (strain DSM 244 / SL1)</name>
    <name type="common">Ectothiorhodospira halophila (strain DSM 244 / SL1)</name>
    <dbReference type="NCBI Taxonomy" id="349124"/>
    <lineage>
        <taxon>Bacteria</taxon>
        <taxon>Pseudomonadati</taxon>
        <taxon>Pseudomonadota</taxon>
        <taxon>Gammaproteobacteria</taxon>
        <taxon>Chromatiales</taxon>
        <taxon>Ectothiorhodospiraceae</taxon>
        <taxon>Halorhodospira</taxon>
    </lineage>
</organism>
<comment type="function">
    <text evidence="1">Catalyzes the reduction of the glycolytic intermediate dihydroxyacetone phosphate (DHAP) to sn-glycerol 3-phosphate (G3P), the key precursor for phospholipid synthesis.</text>
</comment>
<comment type="catalytic activity">
    <reaction evidence="1">
        <text>sn-glycerol 3-phosphate + NAD(+) = dihydroxyacetone phosphate + NADH + H(+)</text>
        <dbReference type="Rhea" id="RHEA:11092"/>
        <dbReference type="ChEBI" id="CHEBI:15378"/>
        <dbReference type="ChEBI" id="CHEBI:57540"/>
        <dbReference type="ChEBI" id="CHEBI:57597"/>
        <dbReference type="ChEBI" id="CHEBI:57642"/>
        <dbReference type="ChEBI" id="CHEBI:57945"/>
        <dbReference type="EC" id="1.1.1.94"/>
    </reaction>
    <physiologicalReaction direction="right-to-left" evidence="1">
        <dbReference type="Rhea" id="RHEA:11094"/>
    </physiologicalReaction>
</comment>
<comment type="catalytic activity">
    <reaction evidence="1">
        <text>sn-glycerol 3-phosphate + NADP(+) = dihydroxyacetone phosphate + NADPH + H(+)</text>
        <dbReference type="Rhea" id="RHEA:11096"/>
        <dbReference type="ChEBI" id="CHEBI:15378"/>
        <dbReference type="ChEBI" id="CHEBI:57597"/>
        <dbReference type="ChEBI" id="CHEBI:57642"/>
        <dbReference type="ChEBI" id="CHEBI:57783"/>
        <dbReference type="ChEBI" id="CHEBI:58349"/>
        <dbReference type="EC" id="1.1.1.94"/>
    </reaction>
    <physiologicalReaction direction="right-to-left" evidence="1">
        <dbReference type="Rhea" id="RHEA:11098"/>
    </physiologicalReaction>
</comment>
<comment type="pathway">
    <text evidence="1">Membrane lipid metabolism; glycerophospholipid metabolism.</text>
</comment>
<comment type="subcellular location">
    <subcellularLocation>
        <location evidence="1">Cytoplasm</location>
    </subcellularLocation>
</comment>
<comment type="similarity">
    <text evidence="1">Belongs to the NAD-dependent glycerol-3-phosphate dehydrogenase family.</text>
</comment>